<gene>
    <name evidence="1" type="primary">trmD</name>
    <name type="ordered locus">Synpcc7942_2235</name>
</gene>
<sequence length="235" mass="26313">MRFDLITLFPEFFHSPLQSGLIAKAIAKGLAEVHCTNPRDFTCDRHHKVDDEPYGGGAGMVLKPEPLAAALESLPVVTPRQVIYLSPQGEPMTQALFQDLATSVEQLVLVCGHYEGIDERVMTWIDREISLGDFVLTCGEIPALALLNGVLRLRPGTIGKEESHRCDSFSDGLLDYPHYTRPAEFRGLKVPEVLLSGNHGAIAAWRRQQQLERTRDRRPDLYQAWQAQQSDLDSH</sequence>
<dbReference type="EC" id="2.1.1.228" evidence="1"/>
<dbReference type="EMBL" id="CP000100">
    <property type="protein sequence ID" value="ABB58265.1"/>
    <property type="molecule type" value="Genomic_DNA"/>
</dbReference>
<dbReference type="RefSeq" id="WP_011244173.1">
    <property type="nucleotide sequence ID" value="NZ_JACJTX010000001.1"/>
</dbReference>
<dbReference type="SMR" id="Q31L04"/>
<dbReference type="STRING" id="1140.Synpcc7942_2235"/>
<dbReference type="PaxDb" id="1140-Synpcc7942_2235"/>
<dbReference type="GeneID" id="72431117"/>
<dbReference type="KEGG" id="syf:Synpcc7942_2235"/>
<dbReference type="eggNOG" id="COG0336">
    <property type="taxonomic scope" value="Bacteria"/>
</dbReference>
<dbReference type="HOGENOM" id="CLU_047363_0_1_3"/>
<dbReference type="OrthoDB" id="9807416at2"/>
<dbReference type="BioCyc" id="SYNEL:SYNPCC7942_2235-MONOMER"/>
<dbReference type="Proteomes" id="UP000889800">
    <property type="component" value="Chromosome"/>
</dbReference>
<dbReference type="GO" id="GO:0005829">
    <property type="term" value="C:cytosol"/>
    <property type="evidence" value="ECO:0007669"/>
    <property type="project" value="TreeGrafter"/>
</dbReference>
<dbReference type="GO" id="GO:0052906">
    <property type="term" value="F:tRNA (guanine(37)-N1)-methyltransferase activity"/>
    <property type="evidence" value="ECO:0007669"/>
    <property type="project" value="UniProtKB-UniRule"/>
</dbReference>
<dbReference type="GO" id="GO:0002939">
    <property type="term" value="P:tRNA N1-guanine methylation"/>
    <property type="evidence" value="ECO:0007669"/>
    <property type="project" value="TreeGrafter"/>
</dbReference>
<dbReference type="CDD" id="cd18080">
    <property type="entry name" value="TrmD-like"/>
    <property type="match status" value="1"/>
</dbReference>
<dbReference type="FunFam" id="1.10.1270.20:FF:000004">
    <property type="entry name" value="tRNA (guanine-N(1)-)-methyltransferase"/>
    <property type="match status" value="1"/>
</dbReference>
<dbReference type="FunFam" id="3.40.1280.10:FF:000001">
    <property type="entry name" value="tRNA (guanine-N(1)-)-methyltransferase"/>
    <property type="match status" value="1"/>
</dbReference>
<dbReference type="Gene3D" id="3.40.1280.10">
    <property type="match status" value="1"/>
</dbReference>
<dbReference type="Gene3D" id="1.10.1270.20">
    <property type="entry name" value="tRNA(m1g37)methyltransferase, domain 2"/>
    <property type="match status" value="1"/>
</dbReference>
<dbReference type="HAMAP" id="MF_00605">
    <property type="entry name" value="TrmD"/>
    <property type="match status" value="1"/>
</dbReference>
<dbReference type="InterPro" id="IPR029028">
    <property type="entry name" value="Alpha/beta_knot_MTases"/>
</dbReference>
<dbReference type="InterPro" id="IPR023148">
    <property type="entry name" value="tRNA_m1G_MeTrfase_C_sf"/>
</dbReference>
<dbReference type="InterPro" id="IPR002649">
    <property type="entry name" value="tRNA_m1G_MeTrfase_TrmD"/>
</dbReference>
<dbReference type="InterPro" id="IPR029026">
    <property type="entry name" value="tRNA_m1G_MTases_N"/>
</dbReference>
<dbReference type="InterPro" id="IPR016009">
    <property type="entry name" value="tRNA_MeTrfase_TRMD/TRM10"/>
</dbReference>
<dbReference type="NCBIfam" id="NF000648">
    <property type="entry name" value="PRK00026.1"/>
    <property type="match status" value="1"/>
</dbReference>
<dbReference type="NCBIfam" id="TIGR00088">
    <property type="entry name" value="trmD"/>
    <property type="match status" value="1"/>
</dbReference>
<dbReference type="PANTHER" id="PTHR46417">
    <property type="entry name" value="TRNA (GUANINE-N(1)-)-METHYLTRANSFERASE"/>
    <property type="match status" value="1"/>
</dbReference>
<dbReference type="PANTHER" id="PTHR46417:SF1">
    <property type="entry name" value="TRNA (GUANINE-N(1)-)-METHYLTRANSFERASE"/>
    <property type="match status" value="1"/>
</dbReference>
<dbReference type="Pfam" id="PF01746">
    <property type="entry name" value="tRNA_m1G_MT"/>
    <property type="match status" value="1"/>
</dbReference>
<dbReference type="PIRSF" id="PIRSF000386">
    <property type="entry name" value="tRNA_mtase"/>
    <property type="match status" value="1"/>
</dbReference>
<dbReference type="SUPFAM" id="SSF75217">
    <property type="entry name" value="alpha/beta knot"/>
    <property type="match status" value="1"/>
</dbReference>
<organism>
    <name type="scientific">Synechococcus elongatus (strain ATCC 33912 / PCC 7942 / FACHB-805)</name>
    <name type="common">Anacystis nidulans R2</name>
    <dbReference type="NCBI Taxonomy" id="1140"/>
    <lineage>
        <taxon>Bacteria</taxon>
        <taxon>Bacillati</taxon>
        <taxon>Cyanobacteriota</taxon>
        <taxon>Cyanophyceae</taxon>
        <taxon>Synechococcales</taxon>
        <taxon>Synechococcaceae</taxon>
        <taxon>Synechococcus</taxon>
    </lineage>
</organism>
<name>TRMD_SYNE7</name>
<accession>Q31L04</accession>
<keyword id="KW-0963">Cytoplasm</keyword>
<keyword id="KW-0489">Methyltransferase</keyword>
<keyword id="KW-1185">Reference proteome</keyword>
<keyword id="KW-0949">S-adenosyl-L-methionine</keyword>
<keyword id="KW-0808">Transferase</keyword>
<keyword id="KW-0819">tRNA processing</keyword>
<evidence type="ECO:0000255" key="1">
    <source>
        <dbReference type="HAMAP-Rule" id="MF_00605"/>
    </source>
</evidence>
<proteinExistence type="inferred from homology"/>
<reference key="1">
    <citation type="submission" date="2005-08" db="EMBL/GenBank/DDBJ databases">
        <title>Complete sequence of chromosome 1 of Synechococcus elongatus PCC 7942.</title>
        <authorList>
            <consortium name="US DOE Joint Genome Institute"/>
            <person name="Copeland A."/>
            <person name="Lucas S."/>
            <person name="Lapidus A."/>
            <person name="Barry K."/>
            <person name="Detter J.C."/>
            <person name="Glavina T."/>
            <person name="Hammon N."/>
            <person name="Israni S."/>
            <person name="Pitluck S."/>
            <person name="Schmutz J."/>
            <person name="Larimer F."/>
            <person name="Land M."/>
            <person name="Kyrpides N."/>
            <person name="Lykidis A."/>
            <person name="Golden S."/>
            <person name="Richardson P."/>
        </authorList>
    </citation>
    <scope>NUCLEOTIDE SEQUENCE [LARGE SCALE GENOMIC DNA]</scope>
    <source>
        <strain>ATCC 33912 / PCC 7942 / FACHB-805</strain>
    </source>
</reference>
<feature type="chain" id="PRO_0000257484" description="tRNA (guanine-N(1)-)-methyltransferase">
    <location>
        <begin position="1"/>
        <end position="235"/>
    </location>
</feature>
<feature type="binding site" evidence="1">
    <location>
        <position position="112"/>
    </location>
    <ligand>
        <name>S-adenosyl-L-methionine</name>
        <dbReference type="ChEBI" id="CHEBI:59789"/>
    </ligand>
</feature>
<feature type="binding site" evidence="1">
    <location>
        <begin position="131"/>
        <end position="136"/>
    </location>
    <ligand>
        <name>S-adenosyl-L-methionine</name>
        <dbReference type="ChEBI" id="CHEBI:59789"/>
    </ligand>
</feature>
<protein>
    <recommendedName>
        <fullName evidence="1">tRNA (guanine-N(1)-)-methyltransferase</fullName>
        <ecNumber evidence="1">2.1.1.228</ecNumber>
    </recommendedName>
    <alternativeName>
        <fullName evidence="1">M1G-methyltransferase</fullName>
    </alternativeName>
    <alternativeName>
        <fullName evidence="1">tRNA [GM37] methyltransferase</fullName>
    </alternativeName>
</protein>
<comment type="function">
    <text evidence="1">Specifically methylates guanosine-37 in various tRNAs.</text>
</comment>
<comment type="catalytic activity">
    <reaction evidence="1">
        <text>guanosine(37) in tRNA + S-adenosyl-L-methionine = N(1)-methylguanosine(37) in tRNA + S-adenosyl-L-homocysteine + H(+)</text>
        <dbReference type="Rhea" id="RHEA:36899"/>
        <dbReference type="Rhea" id="RHEA-COMP:10145"/>
        <dbReference type="Rhea" id="RHEA-COMP:10147"/>
        <dbReference type="ChEBI" id="CHEBI:15378"/>
        <dbReference type="ChEBI" id="CHEBI:57856"/>
        <dbReference type="ChEBI" id="CHEBI:59789"/>
        <dbReference type="ChEBI" id="CHEBI:73542"/>
        <dbReference type="ChEBI" id="CHEBI:74269"/>
        <dbReference type="EC" id="2.1.1.228"/>
    </reaction>
</comment>
<comment type="subunit">
    <text evidence="1">Homodimer.</text>
</comment>
<comment type="subcellular location">
    <subcellularLocation>
        <location evidence="1">Cytoplasm</location>
    </subcellularLocation>
</comment>
<comment type="similarity">
    <text evidence="1">Belongs to the RNA methyltransferase TrmD family.</text>
</comment>